<gene>
    <name evidence="1" type="primary">mdtJ</name>
    <name type="ordered locus">SeHA_C1651</name>
</gene>
<organism>
    <name type="scientific">Salmonella heidelberg (strain SL476)</name>
    <dbReference type="NCBI Taxonomy" id="454169"/>
    <lineage>
        <taxon>Bacteria</taxon>
        <taxon>Pseudomonadati</taxon>
        <taxon>Pseudomonadota</taxon>
        <taxon>Gammaproteobacteria</taxon>
        <taxon>Enterobacterales</taxon>
        <taxon>Enterobacteriaceae</taxon>
        <taxon>Salmonella</taxon>
    </lineage>
</organism>
<name>MDTJ_SALHS</name>
<comment type="function">
    <text evidence="1">Catalyzes the excretion of spermidine.</text>
</comment>
<comment type="subunit">
    <text evidence="1">Forms a complex with MdtI.</text>
</comment>
<comment type="subcellular location">
    <subcellularLocation>
        <location evidence="1">Cell inner membrane</location>
        <topology evidence="1">Multi-pass membrane protein</topology>
    </subcellularLocation>
</comment>
<comment type="similarity">
    <text evidence="1">Belongs to the drug/metabolite transporter (DMT) superfamily. Small multidrug resistance (SMR) (TC 2.A.7.1) family. MdtJ subfamily.</text>
</comment>
<protein>
    <recommendedName>
        <fullName evidence="1">Spermidine export protein MdtJ</fullName>
    </recommendedName>
</protein>
<feature type="chain" id="PRO_1000197338" description="Spermidine export protein MdtJ">
    <location>
        <begin position="1"/>
        <end position="120"/>
    </location>
</feature>
<feature type="transmembrane region" description="Helical" evidence="1">
    <location>
        <begin position="1"/>
        <end position="21"/>
    </location>
</feature>
<feature type="transmembrane region" description="Helical" evidence="1">
    <location>
        <begin position="31"/>
        <end position="51"/>
    </location>
</feature>
<feature type="transmembrane region" description="Helical" evidence="1">
    <location>
        <begin position="54"/>
        <end position="74"/>
    </location>
</feature>
<feature type="transmembrane region" description="Helical" evidence="1">
    <location>
        <begin position="81"/>
        <end position="101"/>
    </location>
</feature>
<evidence type="ECO:0000255" key="1">
    <source>
        <dbReference type="HAMAP-Rule" id="MF_01598"/>
    </source>
</evidence>
<keyword id="KW-0997">Cell inner membrane</keyword>
<keyword id="KW-1003">Cell membrane</keyword>
<keyword id="KW-0472">Membrane</keyword>
<keyword id="KW-0812">Transmembrane</keyword>
<keyword id="KW-1133">Transmembrane helix</keyword>
<keyword id="KW-0813">Transport</keyword>
<reference key="1">
    <citation type="journal article" date="2011" name="J. Bacteriol.">
        <title>Comparative genomics of 28 Salmonella enterica isolates: evidence for CRISPR-mediated adaptive sublineage evolution.</title>
        <authorList>
            <person name="Fricke W.F."/>
            <person name="Mammel M.K."/>
            <person name="McDermott P.F."/>
            <person name="Tartera C."/>
            <person name="White D.G."/>
            <person name="Leclerc J.E."/>
            <person name="Ravel J."/>
            <person name="Cebula T.A."/>
        </authorList>
    </citation>
    <scope>NUCLEOTIDE SEQUENCE [LARGE SCALE GENOMIC DNA]</scope>
    <source>
        <strain>SL476</strain>
    </source>
</reference>
<accession>B4THR3</accession>
<proteinExistence type="inferred from homology"/>
<sequence>MFYWILLALAIATEITGTLSMKWASVGNGNAGFILMLVMITLSYIFLSFAVKKIALGVAYALWEGIGILFITIFSVLLFDEALSTMKIAGLLTLVAGIVLIKSGTRKPGKPVKEATRATI</sequence>
<dbReference type="EMBL" id="CP001120">
    <property type="protein sequence ID" value="ACF68578.1"/>
    <property type="molecule type" value="Genomic_DNA"/>
</dbReference>
<dbReference type="RefSeq" id="WP_000500278.1">
    <property type="nucleotide sequence ID" value="NC_011083.1"/>
</dbReference>
<dbReference type="SMR" id="B4THR3"/>
<dbReference type="KEGG" id="seh:SeHA_C1651"/>
<dbReference type="HOGENOM" id="CLU_133067_0_0_6"/>
<dbReference type="Proteomes" id="UP000001866">
    <property type="component" value="Chromosome"/>
</dbReference>
<dbReference type="GO" id="GO:0005886">
    <property type="term" value="C:plasma membrane"/>
    <property type="evidence" value="ECO:0007669"/>
    <property type="project" value="UniProtKB-SubCell"/>
</dbReference>
<dbReference type="GO" id="GO:0015199">
    <property type="term" value="F:amino-acid betaine transmembrane transporter activity"/>
    <property type="evidence" value="ECO:0007669"/>
    <property type="project" value="TreeGrafter"/>
</dbReference>
<dbReference type="GO" id="GO:0015297">
    <property type="term" value="F:antiporter activity"/>
    <property type="evidence" value="ECO:0007669"/>
    <property type="project" value="TreeGrafter"/>
</dbReference>
<dbReference type="GO" id="GO:0015220">
    <property type="term" value="F:choline transmembrane transporter activity"/>
    <property type="evidence" value="ECO:0007669"/>
    <property type="project" value="TreeGrafter"/>
</dbReference>
<dbReference type="GO" id="GO:0015606">
    <property type="term" value="F:spermidine transmembrane transporter activity"/>
    <property type="evidence" value="ECO:0007669"/>
    <property type="project" value="UniProtKB-UniRule"/>
</dbReference>
<dbReference type="GO" id="GO:0031460">
    <property type="term" value="P:glycine betaine transport"/>
    <property type="evidence" value="ECO:0007669"/>
    <property type="project" value="TreeGrafter"/>
</dbReference>
<dbReference type="FunFam" id="1.10.3730.20:FF:000001">
    <property type="entry name" value="Quaternary ammonium compound resistance transporter SugE"/>
    <property type="match status" value="1"/>
</dbReference>
<dbReference type="Gene3D" id="1.10.3730.20">
    <property type="match status" value="1"/>
</dbReference>
<dbReference type="HAMAP" id="MF_01598">
    <property type="entry name" value="MdtJ"/>
    <property type="match status" value="1"/>
</dbReference>
<dbReference type="InterPro" id="IPR000390">
    <property type="entry name" value="Small_drug/metabolite_transptr"/>
</dbReference>
<dbReference type="InterPro" id="IPR045324">
    <property type="entry name" value="Small_multidrug_res"/>
</dbReference>
<dbReference type="InterPro" id="IPR023740">
    <property type="entry name" value="Spermidine_export_MdtJ"/>
</dbReference>
<dbReference type="NCBIfam" id="NF007767">
    <property type="entry name" value="PRK10452.1"/>
    <property type="match status" value="1"/>
</dbReference>
<dbReference type="PANTHER" id="PTHR30561">
    <property type="entry name" value="SMR FAMILY PROTON-DEPENDENT DRUG EFFLUX TRANSPORTER SUGE"/>
    <property type="match status" value="1"/>
</dbReference>
<dbReference type="PANTHER" id="PTHR30561:SF2">
    <property type="entry name" value="SPERMIDINE EXPORT PROTEIN MDTJ"/>
    <property type="match status" value="1"/>
</dbReference>
<dbReference type="Pfam" id="PF00893">
    <property type="entry name" value="Multi_Drug_Res"/>
    <property type="match status" value="1"/>
</dbReference>
<dbReference type="SUPFAM" id="SSF103481">
    <property type="entry name" value="Multidrug resistance efflux transporter EmrE"/>
    <property type="match status" value="1"/>
</dbReference>